<organism>
    <name type="scientific">Mus musculus</name>
    <name type="common">Mouse</name>
    <dbReference type="NCBI Taxonomy" id="10090"/>
    <lineage>
        <taxon>Eukaryota</taxon>
        <taxon>Metazoa</taxon>
        <taxon>Chordata</taxon>
        <taxon>Craniata</taxon>
        <taxon>Vertebrata</taxon>
        <taxon>Euteleostomi</taxon>
        <taxon>Mammalia</taxon>
        <taxon>Eutheria</taxon>
        <taxon>Euarchontoglires</taxon>
        <taxon>Glires</taxon>
        <taxon>Rodentia</taxon>
        <taxon>Myomorpha</taxon>
        <taxon>Muroidea</taxon>
        <taxon>Muridae</taxon>
        <taxon>Murinae</taxon>
        <taxon>Mus</taxon>
        <taxon>Mus</taxon>
    </lineage>
</organism>
<dbReference type="EMBL" id="S65735">
    <property type="protein sequence ID" value="AAB28350.1"/>
    <property type="molecule type" value="mRNA"/>
</dbReference>
<dbReference type="EMBL" id="BC024759">
    <property type="protein sequence ID" value="AAH24759.1"/>
    <property type="molecule type" value="mRNA"/>
</dbReference>
<dbReference type="EMBL" id="BC029683">
    <property type="protein sequence ID" value="AAH29683.1"/>
    <property type="molecule type" value="mRNA"/>
</dbReference>
<dbReference type="EMBL" id="BC029711">
    <property type="protein sequence ID" value="AAH29711.1"/>
    <property type="molecule type" value="mRNA"/>
</dbReference>
<dbReference type="EMBL" id="BC033357">
    <property type="protein sequence ID" value="AAH33357.1"/>
    <property type="molecule type" value="mRNA"/>
</dbReference>
<dbReference type="EMBL" id="BC033394">
    <property type="protein sequence ID" value="AAH33394.1"/>
    <property type="molecule type" value="mRNA"/>
</dbReference>
<dbReference type="EMBL" id="BC043130">
    <property type="protein sequence ID" value="AAH43130.1"/>
    <property type="molecule type" value="mRNA"/>
</dbReference>
<dbReference type="CCDS" id="CCDS22310.1"/>
<dbReference type="RefSeq" id="NP_001240683.1">
    <property type="nucleotide sequence ID" value="NM_001253754.1"/>
</dbReference>
<dbReference type="RefSeq" id="NP_001240685.1">
    <property type="nucleotide sequence ID" value="NM_001253756.1"/>
</dbReference>
<dbReference type="RefSeq" id="NP_705809.1">
    <property type="nucleotide sequence ID" value="NM_153581.6"/>
</dbReference>
<dbReference type="BioGRID" id="231507">
    <property type="interactions" value="31"/>
</dbReference>
<dbReference type="FunCoup" id="P35802">
    <property type="interactions" value="446"/>
</dbReference>
<dbReference type="IntAct" id="P35802">
    <property type="interactions" value="3"/>
</dbReference>
<dbReference type="MINT" id="P35802"/>
<dbReference type="STRING" id="10090.ENSMUSP00000033915"/>
<dbReference type="TCDB" id="9.B.38.1.1">
    <property type="family name" value="the myelin proteolipid protein (mplp) family"/>
</dbReference>
<dbReference type="GlyCosmos" id="P35802">
    <property type="glycosylation" value="2 sites, No reported glycans"/>
</dbReference>
<dbReference type="GlyGen" id="P35802">
    <property type="glycosylation" value="3 sites, 1 N-linked glycan (1 site), 1 O-linked glycan (1 site)"/>
</dbReference>
<dbReference type="iPTMnet" id="P35802"/>
<dbReference type="MetOSite" id="P35802"/>
<dbReference type="PhosphoSitePlus" id="P35802"/>
<dbReference type="SwissPalm" id="P35802"/>
<dbReference type="jPOST" id="P35802"/>
<dbReference type="PaxDb" id="10090-ENSMUSP00000033915"/>
<dbReference type="PeptideAtlas" id="P35802"/>
<dbReference type="ProteomicsDB" id="271144"/>
<dbReference type="Antibodypedia" id="17235">
    <property type="antibodies" value="299 antibodies from 31 providers"/>
</dbReference>
<dbReference type="DNASU" id="234267"/>
<dbReference type="Ensembl" id="ENSMUST00000033915.9">
    <property type="protein sequence ID" value="ENSMUSP00000033915.8"/>
    <property type="gene ID" value="ENSMUSG00000031517.9"/>
</dbReference>
<dbReference type="GeneID" id="234267"/>
<dbReference type="KEGG" id="mmu:234267"/>
<dbReference type="UCSC" id="uc009lsl.2">
    <property type="organism name" value="mouse"/>
</dbReference>
<dbReference type="AGR" id="MGI:107671"/>
<dbReference type="CTD" id="2823"/>
<dbReference type="MGI" id="MGI:107671">
    <property type="gene designation" value="Gpm6a"/>
</dbReference>
<dbReference type="VEuPathDB" id="HostDB:ENSMUSG00000031517"/>
<dbReference type="eggNOG" id="KOG4800">
    <property type="taxonomic scope" value="Eukaryota"/>
</dbReference>
<dbReference type="GeneTree" id="ENSGT00390000006915"/>
<dbReference type="HOGENOM" id="CLU_064167_2_0_1"/>
<dbReference type="InParanoid" id="P35802"/>
<dbReference type="OMA" id="CTLNENF"/>
<dbReference type="OrthoDB" id="9993736at2759"/>
<dbReference type="PhylomeDB" id="P35802"/>
<dbReference type="TreeFam" id="TF315162"/>
<dbReference type="BioGRID-ORCS" id="234267">
    <property type="hits" value="1 hit in 76 CRISPR screens"/>
</dbReference>
<dbReference type="CD-CODE" id="CE726F99">
    <property type="entry name" value="Postsynaptic density"/>
</dbReference>
<dbReference type="ChiTaRS" id="Gpm6a">
    <property type="organism name" value="mouse"/>
</dbReference>
<dbReference type="PRO" id="PR:P35802"/>
<dbReference type="Proteomes" id="UP000000589">
    <property type="component" value="Chromosome 8"/>
</dbReference>
<dbReference type="RNAct" id="P35802">
    <property type="molecule type" value="protein"/>
</dbReference>
<dbReference type="Bgee" id="ENSMUSG00000031517">
    <property type="expression patterns" value="Expressed in subiculum and 221 other cell types or tissues"/>
</dbReference>
<dbReference type="ExpressionAtlas" id="P35802">
    <property type="expression patterns" value="baseline and differential"/>
</dbReference>
<dbReference type="GO" id="GO:0044295">
    <property type="term" value="C:axonal growth cone"/>
    <property type="evidence" value="ECO:0000314"/>
    <property type="project" value="UniProtKB"/>
</dbReference>
<dbReference type="GO" id="GO:0043197">
    <property type="term" value="C:dendritic spine"/>
    <property type="evidence" value="ECO:0007669"/>
    <property type="project" value="UniProtKB-SubCell"/>
</dbReference>
<dbReference type="GO" id="GO:0030175">
    <property type="term" value="C:filopodium"/>
    <property type="evidence" value="ECO:0000250"/>
    <property type="project" value="UniProtKB"/>
</dbReference>
<dbReference type="GO" id="GO:0098978">
    <property type="term" value="C:glutamatergic synapse"/>
    <property type="evidence" value="ECO:0007669"/>
    <property type="project" value="Ensembl"/>
</dbReference>
<dbReference type="GO" id="GO:0043005">
    <property type="term" value="C:neuron projection"/>
    <property type="evidence" value="ECO:0000250"/>
    <property type="project" value="UniProtKB"/>
</dbReference>
<dbReference type="GO" id="GO:0043025">
    <property type="term" value="C:neuronal cell body"/>
    <property type="evidence" value="ECO:0000250"/>
    <property type="project" value="UniProtKB"/>
</dbReference>
<dbReference type="GO" id="GO:0098688">
    <property type="term" value="C:parallel fiber to Purkinje cell synapse"/>
    <property type="evidence" value="ECO:0007669"/>
    <property type="project" value="Ensembl"/>
</dbReference>
<dbReference type="GO" id="GO:0005886">
    <property type="term" value="C:plasma membrane"/>
    <property type="evidence" value="ECO:0000250"/>
    <property type="project" value="UniProtKB"/>
</dbReference>
<dbReference type="GO" id="GO:0048787">
    <property type="term" value="C:presynaptic active zone membrane"/>
    <property type="evidence" value="ECO:0007669"/>
    <property type="project" value="Ensembl"/>
</dbReference>
<dbReference type="GO" id="GO:0005262">
    <property type="term" value="F:calcium channel activity"/>
    <property type="evidence" value="ECO:0007669"/>
    <property type="project" value="Ensembl"/>
</dbReference>
<dbReference type="GO" id="GO:0003407">
    <property type="term" value="P:neural retina development"/>
    <property type="evidence" value="ECO:0000314"/>
    <property type="project" value="UniProtKB"/>
</dbReference>
<dbReference type="GO" id="GO:0001764">
    <property type="term" value="P:neuron migration"/>
    <property type="evidence" value="ECO:0000250"/>
    <property type="project" value="UniProtKB"/>
</dbReference>
<dbReference type="GO" id="GO:0048812">
    <property type="term" value="P:neuron projection morphogenesis"/>
    <property type="evidence" value="ECO:0000314"/>
    <property type="project" value="UniProtKB"/>
</dbReference>
<dbReference type="GO" id="GO:0051491">
    <property type="term" value="P:positive regulation of filopodium assembly"/>
    <property type="evidence" value="ECO:0000250"/>
    <property type="project" value="UniProtKB"/>
</dbReference>
<dbReference type="GO" id="GO:0050807">
    <property type="term" value="P:regulation of synapse organization"/>
    <property type="evidence" value="ECO:0007669"/>
    <property type="project" value="Ensembl"/>
</dbReference>
<dbReference type="GO" id="GO:0009617">
    <property type="term" value="P:response to bacterium"/>
    <property type="evidence" value="ECO:0000270"/>
    <property type="project" value="MGI"/>
</dbReference>
<dbReference type="GO" id="GO:0048863">
    <property type="term" value="P:stem cell differentiation"/>
    <property type="evidence" value="ECO:0000250"/>
    <property type="project" value="UniProtKB"/>
</dbReference>
<dbReference type="GO" id="GO:0007416">
    <property type="term" value="P:synapse assembly"/>
    <property type="evidence" value="ECO:0000250"/>
    <property type="project" value="UniProtKB"/>
</dbReference>
<dbReference type="InterPro" id="IPR001614">
    <property type="entry name" value="Myelin_PLP"/>
</dbReference>
<dbReference type="InterPro" id="IPR018237">
    <property type="entry name" value="Myelin_PLP_CS"/>
</dbReference>
<dbReference type="PANTHER" id="PTHR11683">
    <property type="entry name" value="MYELIN PROTEOLIPID"/>
    <property type="match status" value="1"/>
</dbReference>
<dbReference type="PANTHER" id="PTHR11683:SF4">
    <property type="entry name" value="NEURONAL MEMBRANE GLYCOPROTEIN M6-A"/>
    <property type="match status" value="1"/>
</dbReference>
<dbReference type="Pfam" id="PF01275">
    <property type="entry name" value="Myelin_PLP"/>
    <property type="match status" value="1"/>
</dbReference>
<dbReference type="PRINTS" id="PR00214">
    <property type="entry name" value="MYELINPLP"/>
</dbReference>
<dbReference type="SMART" id="SM00002">
    <property type="entry name" value="PLP"/>
    <property type="match status" value="1"/>
</dbReference>
<dbReference type="PROSITE" id="PS00575">
    <property type="entry name" value="MYELIN_PLP_1"/>
    <property type="match status" value="1"/>
</dbReference>
<dbReference type="PROSITE" id="PS01004">
    <property type="entry name" value="MYELIN_PLP_2"/>
    <property type="match status" value="1"/>
</dbReference>
<comment type="function">
    <text evidence="5 6 8">Involved in neuronal differentiation, including differentiation and migration of neuronal stem cells. Plays a role in neuronal plasticity and is involved in neurite and filopodia outgrowth, filopodia motility and probably synapse formation. Gpm6a-induced filopodia formation involves mitogen-activated protein kinase (MAPK) and Src signaling pathways. Conflictingly, PubMed:22162747 reports that induced cellular protrusions are simple membrane-wrapped tubules without actin or tubulin-based cytoskeletons and with Gpm6a gliding along membrane edges indicative for a function in actin-independent membrane deformation. May be involved in neuronal NGF-dependent Ca(2+) influx. May be involved in regulation of endocytosis and intracellular trafficking of G-protein-coupled receptors (GPCRs); enhances internalization and recycling of mu-type opioid receptor.</text>
</comment>
<comment type="subunit">
    <text evidence="2 3">Interacts with OPRM1 (By similarity). Interacts with palmitoyltransferase ZDHHC17/HIP14; the interaction leads to palmitoylation of GPM6A (By similarity).</text>
</comment>
<comment type="subcellular location">
    <subcellularLocation>
        <location evidence="7">Cell membrane</location>
        <topology evidence="7">Multi-pass membrane protein</topology>
    </subcellularLocation>
    <subcellularLocation>
        <location evidence="7">Cell projection</location>
        <location evidence="7">Axon</location>
    </subcellularLocation>
    <subcellularLocation>
        <location evidence="7">Cell projection</location>
        <location evidence="7">Growth cone</location>
    </subcellularLocation>
    <subcellularLocation>
        <location evidence="3">Cell projection</location>
        <location evidence="3">Dendritic spine</location>
    </subcellularLocation>
    <subcellularLocation>
        <location evidence="3">Cell projection</location>
        <location evidence="3">Filopodium</location>
    </subcellularLocation>
    <subcellularLocation>
        <location evidence="3">Cell projection</location>
        <location evidence="3">Neuron projection</location>
    </subcellularLocation>
    <text evidence="3 7">Localizes to cholesterol-rich lipid rafts of the plasma membrane of hippocampal neurons. Localized to plasma membrane of cell bodies and neurites of hippocampal neurons. Localized in membrane protrusions (filopodia and spines) of primary hippocampal neurons (By similarity). Localized to the growth cone edge membrane of elongating axons (PubMed:21714103).</text>
</comment>
<comment type="tissue specificity">
    <text evidence="6">Widely expressed in the CNS. Found especially in the granule cell layer of the cerebellum but not in the molecular layer or white matter. Expressed in the immature embryonic retina including the nerve fiber layer (NFL), inner plexiform layer (IPL), and outer plexiform layer (OPL). Weakly expressed in processes of Mueller glia cells.</text>
</comment>
<comment type="developmental stage">
    <text evidence="6">First detected in presumptive postmitotic neurons in the developing neural tube at embryonic day 9. Expressed in 14 dpc retinas, and expression continued after birth with a slight decrease between P12 and P15. In the 14 dpc retina is mainly and strongly expressed in the NFL. In P1 and P5 retinas strong expression is confined to the IPL and also in NFL. At P10 and in the adult retina strong expression is detected in the IPL, and weak expression in NFL, OPL, and inner nuclear layer. Is expressed on postmitotic mature neurons.</text>
</comment>
<comment type="PTM">
    <text evidence="2">N-glycosylated.</text>
</comment>
<comment type="PTM">
    <text evidence="2">Palmitoylated by ZDHHC17/HIP14.</text>
</comment>
<comment type="similarity">
    <text evidence="9">Belongs to the myelin proteolipid protein family.</text>
</comment>
<reference key="1">
    <citation type="journal article" date="1993" name="Neuron">
        <title>Molecular cloning of M6: identification of a PLP/DM20 gene family.</title>
        <authorList>
            <person name="Yan Y."/>
            <person name="Lagenaur C."/>
            <person name="Narayanan V."/>
        </authorList>
    </citation>
    <scope>NUCLEOTIDE SEQUENCE [MRNA]</scope>
    <scope>PROTEIN SEQUENCE OF 67-78</scope>
    <source>
        <tissue>Brain</tissue>
    </source>
</reference>
<reference key="2">
    <citation type="journal article" date="2004" name="Genome Res.">
        <title>The status, quality, and expansion of the NIH full-length cDNA project: the Mammalian Gene Collection (MGC).</title>
        <authorList>
            <consortium name="The MGC Project Team"/>
        </authorList>
    </citation>
    <scope>NUCLEOTIDE SEQUENCE [LARGE SCALE MRNA]</scope>
    <source>
        <strain>C57BL/6J</strain>
        <tissue>Brain</tissue>
        <tissue>Eye</tissue>
        <tissue>Retina</tissue>
    </source>
</reference>
<reference key="3">
    <citation type="submission" date="2007-04" db="UniProtKB">
        <authorList>
            <person name="Lubec G."/>
            <person name="Kang S.U."/>
        </authorList>
    </citation>
    <scope>PROTEIN SEQUENCE OF 13-20; 67-82; 112-118; 179-200 AND 256-269</scope>
    <scope>IDENTIFICATION BY MASS SPECTROMETRY</scope>
    <source>
        <strain>C57BL/6J</strain>
        <tissue>Brain</tissue>
    </source>
</reference>
<reference key="4">
    <citation type="journal article" date="2008" name="Mol. Vis.">
        <title>M6a is expressed in the murine neural retina and regulates neurite extension.</title>
        <authorList>
            <person name="Zhao J."/>
            <person name="Iida A."/>
            <person name="Ouchi Y."/>
            <person name="Satoh S."/>
            <person name="Watanabe S."/>
        </authorList>
    </citation>
    <scope>FUNCTION</scope>
    <scope>DEVELOPMENTAL STAGE</scope>
    <scope>TISSUE SPECIFICITY</scope>
</reference>
<reference key="5">
    <citation type="journal article" date="2008" name="Stem Cells Dev.">
        <title>Inhibition of mouse GPM6A expression leads to decreased differentiation of neurons derived from mouse embryonic stem cells.</title>
        <authorList>
            <person name="Michibata H."/>
            <person name="Okuno T."/>
            <person name="Konishi N."/>
            <person name="Wakimoto K."/>
            <person name="Kyono K."/>
            <person name="Aoki K."/>
            <person name="Kondo Y."/>
            <person name="Takata K."/>
            <person name="Kitamura Y."/>
            <person name="Taniguchi T."/>
        </authorList>
    </citation>
    <scope>FUNCTION</scope>
</reference>
<reference key="6">
    <citation type="journal article" date="2010" name="Cell">
        <title>A tissue-specific atlas of mouse protein phosphorylation and expression.</title>
        <authorList>
            <person name="Huttlin E.L."/>
            <person name="Jedrychowski M.P."/>
            <person name="Elias J.E."/>
            <person name="Goswami T."/>
            <person name="Rad R."/>
            <person name="Beausoleil S.A."/>
            <person name="Villen J."/>
            <person name="Haas W."/>
            <person name="Sowa M.E."/>
            <person name="Gygi S.P."/>
        </authorList>
    </citation>
    <scope>PHOSPHORYLATION [LARGE SCALE ANALYSIS] AT SER-256</scope>
    <scope>IDENTIFICATION BY MASS SPECTROMETRY [LARGE SCALE ANALYSIS]</scope>
    <source>
        <tissue>Brain</tissue>
        <tissue>Brown adipose tissue</tissue>
        <tissue>Kidney</tissue>
        <tissue>Lung</tissue>
    </source>
</reference>
<reference key="7">
    <citation type="journal article" date="2011" name="Dev. Neurobiol.">
        <title>Induction of axon growth arrest without growth cone collapse through the N-terminal region of four-transmembrane glycoprotein M6a.</title>
        <authorList>
            <person name="Sato Y."/>
            <person name="Mita S."/>
            <person name="Fukushima N."/>
            <person name="Fujisawa H."/>
            <person name="Saga Y."/>
            <person name="Hirata T."/>
        </authorList>
    </citation>
    <scope>SUBCELLULAR LOCATION</scope>
</reference>
<reference key="8">
    <citation type="journal article" date="2011" name="PLoS ONE">
        <title>Actin-independent behavior and membrane deformation exhibited by the four-transmembrane protein M6a.</title>
        <authorList>
            <person name="Sato Y."/>
            <person name="Watanabe N."/>
            <person name="Fukushima N."/>
            <person name="Mita S."/>
            <person name="Hirata T."/>
        </authorList>
    </citation>
    <scope>FUNCTION</scope>
</reference>
<gene>
    <name type="primary">Gpm6a</name>
    <name type="synonym">M6a</name>
</gene>
<sequence length="278" mass="31149">MEENMEEGQTQKGCFECCIKCLGGIPYASLIATILLYAGVALFCGCGHEALSGTVNILQTYFELARTAGDTLDVFTMIDIFKYVIYGIAAAFFVYGILLMVEGFFTTGAIKDLYGDFKITTCGRCVSAWFIMLTYLFMLAWLGVTAFTSLPVYMYFNVWTICRNTTLVEGANLCLDLRQFGIVTIGEEKKICTASENFLRMCESTELNMTFHLFIVALAGAGAAVIAMVHYLMVLSANWAYVKDACRMQKYEDIKSKEEQELHDIHSTRSKERLNAYT</sequence>
<name>GPM6A_MOUSE</name>
<accession>P35802</accession>
<keyword id="KW-0007">Acetylation</keyword>
<keyword id="KW-1003">Cell membrane</keyword>
<keyword id="KW-0966">Cell projection</keyword>
<keyword id="KW-0903">Direct protein sequencing</keyword>
<keyword id="KW-1015">Disulfide bond</keyword>
<keyword id="KW-0325">Glycoprotein</keyword>
<keyword id="KW-0449">Lipoprotein</keyword>
<keyword id="KW-0472">Membrane</keyword>
<keyword id="KW-0524">Neurogenesis</keyword>
<keyword id="KW-0564">Palmitate</keyword>
<keyword id="KW-0597">Phosphoprotein</keyword>
<keyword id="KW-1185">Reference proteome</keyword>
<keyword id="KW-0770">Synapse</keyword>
<keyword id="KW-0812">Transmembrane</keyword>
<keyword id="KW-1133">Transmembrane helix</keyword>
<proteinExistence type="evidence at protein level"/>
<evidence type="ECO:0000250" key="1"/>
<evidence type="ECO:0000250" key="2">
    <source>
        <dbReference type="UniProtKB" id="P51674"/>
    </source>
</evidence>
<evidence type="ECO:0000250" key="3">
    <source>
        <dbReference type="UniProtKB" id="Q812E9"/>
    </source>
</evidence>
<evidence type="ECO:0000255" key="4"/>
<evidence type="ECO:0000269" key="5">
    <source>
    </source>
</evidence>
<evidence type="ECO:0000269" key="6">
    <source>
    </source>
</evidence>
<evidence type="ECO:0000269" key="7">
    <source>
    </source>
</evidence>
<evidence type="ECO:0000269" key="8">
    <source>
    </source>
</evidence>
<evidence type="ECO:0000305" key="9"/>
<evidence type="ECO:0007744" key="10">
    <source>
    </source>
</evidence>
<protein>
    <recommendedName>
        <fullName>Neuronal membrane glycoprotein M6-a</fullName>
        <shortName>M6a</shortName>
    </recommendedName>
</protein>
<feature type="chain" id="PRO_0000159019" description="Neuronal membrane glycoprotein M6-a">
    <location>
        <begin position="1"/>
        <end position="278"/>
    </location>
</feature>
<feature type="topological domain" description="Cytoplasmic" evidence="4">
    <location>
        <begin position="1"/>
        <end position="22"/>
    </location>
</feature>
<feature type="transmembrane region" description="Helical" evidence="4">
    <location>
        <begin position="23"/>
        <end position="43"/>
    </location>
</feature>
<feature type="topological domain" description="Extracellular" evidence="4">
    <location>
        <begin position="44"/>
        <end position="84"/>
    </location>
</feature>
<feature type="transmembrane region" description="Helical" evidence="4">
    <location>
        <begin position="85"/>
        <end position="105"/>
    </location>
</feature>
<feature type="topological domain" description="Cytoplasmic" evidence="4">
    <location>
        <begin position="106"/>
        <end position="127"/>
    </location>
</feature>
<feature type="transmembrane region" description="Helical" evidence="4">
    <location>
        <begin position="128"/>
        <end position="148"/>
    </location>
</feature>
<feature type="topological domain" description="Extracellular" evidence="1">
    <location>
        <begin position="149"/>
        <end position="213"/>
    </location>
</feature>
<feature type="transmembrane region" description="Helical" evidence="4">
    <location>
        <begin position="214"/>
        <end position="234"/>
    </location>
</feature>
<feature type="topological domain" description="Cytoplasmic" evidence="4">
    <location>
        <begin position="235"/>
        <end position="278"/>
    </location>
</feature>
<feature type="modified residue" description="N-acetylmethionine" evidence="2">
    <location>
        <position position="1"/>
    </location>
</feature>
<feature type="modified residue" description="Phosphoserine" evidence="10">
    <location>
        <position position="256"/>
    </location>
</feature>
<feature type="modified residue" description="Phosphothreonine" evidence="3">
    <location>
        <position position="278"/>
    </location>
</feature>
<feature type="glycosylation site" description="N-linked (GlcNAc...) asparagine" evidence="4">
    <location>
        <position position="164"/>
    </location>
</feature>
<feature type="glycosylation site" description="N-linked (GlcNAc...) asparagine" evidence="4">
    <location>
        <position position="208"/>
    </location>
</feature>
<feature type="disulfide bond" evidence="1">
    <location>
        <begin position="174"/>
        <end position="192"/>
    </location>
</feature>